<name>UREE1_PSESM</name>
<dbReference type="EMBL" id="AE016853">
    <property type="protein sequence ID" value="AAO55922.1"/>
    <property type="molecule type" value="Genomic_DNA"/>
</dbReference>
<dbReference type="RefSeq" id="NP_792227.1">
    <property type="nucleotide sequence ID" value="NC_004578.1"/>
</dbReference>
<dbReference type="SMR" id="Q883F1"/>
<dbReference type="STRING" id="223283.PSPTO_2413"/>
<dbReference type="KEGG" id="pst:PSPTO_2413"/>
<dbReference type="PATRIC" id="fig|223283.9.peg.2450"/>
<dbReference type="eggNOG" id="COG2371">
    <property type="taxonomic scope" value="Bacteria"/>
</dbReference>
<dbReference type="HOGENOM" id="CLU_127517_0_0_6"/>
<dbReference type="OrthoDB" id="7376380at2"/>
<dbReference type="Proteomes" id="UP000002515">
    <property type="component" value="Chromosome"/>
</dbReference>
<dbReference type="GO" id="GO:0005737">
    <property type="term" value="C:cytoplasm"/>
    <property type="evidence" value="ECO:0007669"/>
    <property type="project" value="UniProtKB-SubCell"/>
</dbReference>
<dbReference type="GO" id="GO:0016151">
    <property type="term" value="F:nickel cation binding"/>
    <property type="evidence" value="ECO:0007669"/>
    <property type="project" value="UniProtKB-UniRule"/>
</dbReference>
<dbReference type="GO" id="GO:0051082">
    <property type="term" value="F:unfolded protein binding"/>
    <property type="evidence" value="ECO:0007669"/>
    <property type="project" value="UniProtKB-UniRule"/>
</dbReference>
<dbReference type="GO" id="GO:0006457">
    <property type="term" value="P:protein folding"/>
    <property type="evidence" value="ECO:0007669"/>
    <property type="project" value="InterPro"/>
</dbReference>
<dbReference type="CDD" id="cd00571">
    <property type="entry name" value="UreE"/>
    <property type="match status" value="1"/>
</dbReference>
<dbReference type="Gene3D" id="2.60.260.20">
    <property type="entry name" value="Urease metallochaperone UreE, N-terminal domain"/>
    <property type="match status" value="1"/>
</dbReference>
<dbReference type="HAMAP" id="MF_00822">
    <property type="entry name" value="UreE"/>
    <property type="match status" value="1"/>
</dbReference>
<dbReference type="InterPro" id="IPR012406">
    <property type="entry name" value="UreE"/>
</dbReference>
<dbReference type="InterPro" id="IPR004029">
    <property type="entry name" value="UreE_N"/>
</dbReference>
<dbReference type="InterPro" id="IPR036118">
    <property type="entry name" value="UreE_N_sf"/>
</dbReference>
<dbReference type="NCBIfam" id="NF009752">
    <property type="entry name" value="PRK13261.1-2"/>
    <property type="match status" value="1"/>
</dbReference>
<dbReference type="Pfam" id="PF02814">
    <property type="entry name" value="UreE_N"/>
    <property type="match status" value="1"/>
</dbReference>
<dbReference type="PIRSF" id="PIRSF036402">
    <property type="entry name" value="Ureas_acces_UreE"/>
    <property type="match status" value="1"/>
</dbReference>
<dbReference type="SMART" id="SM00988">
    <property type="entry name" value="UreE_N"/>
    <property type="match status" value="1"/>
</dbReference>
<dbReference type="SUPFAM" id="SSF69287">
    <property type="entry name" value="Urease metallochaperone UreE, N-terminal domain"/>
    <property type="match status" value="1"/>
</dbReference>
<protein>
    <recommendedName>
        <fullName evidence="1">Urease accessory protein UreE 1</fullName>
    </recommendedName>
</protein>
<proteinExistence type="inferred from homology"/>
<comment type="function">
    <text evidence="1">Involved in urease metallocenter assembly. Binds nickel. Probably functions as a nickel donor during metallocenter assembly.</text>
</comment>
<comment type="subcellular location">
    <subcellularLocation>
        <location evidence="1">Cytoplasm</location>
    </subcellularLocation>
</comment>
<comment type="similarity">
    <text evidence="1">Belongs to the UreE family.</text>
</comment>
<evidence type="ECO:0000255" key="1">
    <source>
        <dbReference type="HAMAP-Rule" id="MF_00822"/>
    </source>
</evidence>
<accession>Q883F1</accession>
<organism>
    <name type="scientific">Pseudomonas syringae pv. tomato (strain ATCC BAA-871 / DC3000)</name>
    <dbReference type="NCBI Taxonomy" id="223283"/>
    <lineage>
        <taxon>Bacteria</taxon>
        <taxon>Pseudomonadati</taxon>
        <taxon>Pseudomonadota</taxon>
        <taxon>Gammaproteobacteria</taxon>
        <taxon>Pseudomonadales</taxon>
        <taxon>Pseudomonadaceae</taxon>
        <taxon>Pseudomonas</taxon>
    </lineage>
</organism>
<reference key="1">
    <citation type="journal article" date="2003" name="Proc. Natl. Acad. Sci. U.S.A.">
        <title>The complete genome sequence of the Arabidopsis and tomato pathogen Pseudomonas syringae pv. tomato DC3000.</title>
        <authorList>
            <person name="Buell C.R."/>
            <person name="Joardar V."/>
            <person name="Lindeberg M."/>
            <person name="Selengut J."/>
            <person name="Paulsen I.T."/>
            <person name="Gwinn M.L."/>
            <person name="Dodson R.J."/>
            <person name="DeBoy R.T."/>
            <person name="Durkin A.S."/>
            <person name="Kolonay J.F."/>
            <person name="Madupu R."/>
            <person name="Daugherty S.C."/>
            <person name="Brinkac L.M."/>
            <person name="Beanan M.J."/>
            <person name="Haft D.H."/>
            <person name="Nelson W.C."/>
            <person name="Davidsen T.M."/>
            <person name="Zafar N."/>
            <person name="Zhou L."/>
            <person name="Liu J."/>
            <person name="Yuan Q."/>
            <person name="Khouri H.M."/>
            <person name="Fedorova N.B."/>
            <person name="Tran B."/>
            <person name="Russell D."/>
            <person name="Berry K.J."/>
            <person name="Utterback T.R."/>
            <person name="Van Aken S.E."/>
            <person name="Feldblyum T.V."/>
            <person name="D'Ascenzo M."/>
            <person name="Deng W.-L."/>
            <person name="Ramos A.R."/>
            <person name="Alfano J.R."/>
            <person name="Cartinhour S."/>
            <person name="Chatterjee A.K."/>
            <person name="Delaney T.P."/>
            <person name="Lazarowitz S.G."/>
            <person name="Martin G.B."/>
            <person name="Schneider D.J."/>
            <person name="Tang X."/>
            <person name="Bender C.L."/>
            <person name="White O."/>
            <person name="Fraser C.M."/>
            <person name="Collmer A."/>
        </authorList>
    </citation>
    <scope>NUCLEOTIDE SEQUENCE [LARGE SCALE GENOMIC DNA]</scope>
    <source>
        <strain>ATCC BAA-871 / DC3000</strain>
    </source>
</reference>
<keyword id="KW-0143">Chaperone</keyword>
<keyword id="KW-0963">Cytoplasm</keyword>
<keyword id="KW-0533">Nickel</keyword>
<keyword id="KW-0996">Nickel insertion</keyword>
<keyword id="KW-1185">Reference proteome</keyword>
<sequence length="146" mass="16291">MLILDRILGQASDPALADRLHDLSHAGQVETLSLSGSDIQRHRLRLASDRGTDCAIRLERHQQLRNGSVLMLDSQRAIVVQMQDQHYLDLLPRDSAAALELGYFAGNMHWAVRFAGDTLQIPLNGPEADYLERLAPMLADGRVRRA</sequence>
<gene>
    <name evidence="1" type="primary">ureE1</name>
    <name type="ordered locus">PSPTO_2413</name>
</gene>
<feature type="chain" id="PRO_0000223427" description="Urease accessory protein UreE 1">
    <location>
        <begin position="1"/>
        <end position="146"/>
    </location>
</feature>